<feature type="chain" id="PRO_0000288130" description="tRNA (guanine-N(7)-)-methyltransferase">
    <location>
        <begin position="1"/>
        <end position="265"/>
    </location>
</feature>
<feature type="region of interest" description="Disordered" evidence="3">
    <location>
        <begin position="1"/>
        <end position="40"/>
    </location>
</feature>
<feature type="compositionally biased region" description="Basic and acidic residues" evidence="3">
    <location>
        <begin position="1"/>
        <end position="16"/>
    </location>
</feature>
<feature type="compositionally biased region" description="Low complexity" evidence="3">
    <location>
        <begin position="18"/>
        <end position="31"/>
    </location>
</feature>
<feature type="active site" evidence="1">
    <location>
        <position position="170"/>
    </location>
</feature>
<feature type="binding site" evidence="2">
    <location>
        <position position="95"/>
    </location>
    <ligand>
        <name>S-adenosyl-L-methionine</name>
        <dbReference type="ChEBI" id="CHEBI:59789"/>
    </ligand>
</feature>
<feature type="binding site" evidence="2">
    <location>
        <position position="120"/>
    </location>
    <ligand>
        <name>S-adenosyl-L-methionine</name>
        <dbReference type="ChEBI" id="CHEBI:59789"/>
    </ligand>
</feature>
<feature type="binding site" evidence="2">
    <location>
        <position position="147"/>
    </location>
    <ligand>
        <name>S-adenosyl-L-methionine</name>
        <dbReference type="ChEBI" id="CHEBI:59789"/>
    </ligand>
</feature>
<feature type="binding site" evidence="2">
    <location>
        <position position="170"/>
    </location>
    <ligand>
        <name>S-adenosyl-L-methionine</name>
        <dbReference type="ChEBI" id="CHEBI:59789"/>
    </ligand>
</feature>
<feature type="binding site" evidence="2">
    <location>
        <position position="174"/>
    </location>
    <ligand>
        <name>substrate</name>
    </ligand>
</feature>
<feature type="binding site" evidence="2">
    <location>
        <position position="206"/>
    </location>
    <ligand>
        <name>substrate</name>
    </ligand>
</feature>
<feature type="binding site" evidence="2">
    <location>
        <begin position="241"/>
        <end position="244"/>
    </location>
    <ligand>
        <name>substrate</name>
    </ligand>
</feature>
<comment type="function">
    <text evidence="2">Catalyzes the formation of N(7)-methylguanine at position 46 (m7G46) in tRNA.</text>
</comment>
<comment type="catalytic activity">
    <reaction evidence="2">
        <text>guanosine(46) in tRNA + S-adenosyl-L-methionine = N(7)-methylguanosine(46) in tRNA + S-adenosyl-L-homocysteine</text>
        <dbReference type="Rhea" id="RHEA:42708"/>
        <dbReference type="Rhea" id="RHEA-COMP:10188"/>
        <dbReference type="Rhea" id="RHEA-COMP:10189"/>
        <dbReference type="ChEBI" id="CHEBI:57856"/>
        <dbReference type="ChEBI" id="CHEBI:59789"/>
        <dbReference type="ChEBI" id="CHEBI:74269"/>
        <dbReference type="ChEBI" id="CHEBI:74480"/>
        <dbReference type="EC" id="2.1.1.33"/>
    </reaction>
</comment>
<comment type="pathway">
    <text evidence="2">tRNA modification; N(7)-methylguanine-tRNA biosynthesis.</text>
</comment>
<comment type="similarity">
    <text evidence="2">Belongs to the class I-like SAM-binding methyltransferase superfamily. TrmB family.</text>
</comment>
<accession>Q2SYE0</accession>
<name>TRMB_BURTA</name>
<gene>
    <name evidence="2" type="primary">trmB</name>
    <name type="ordered locus">BTH_I1513</name>
</gene>
<reference key="1">
    <citation type="journal article" date="2005" name="BMC Genomics">
        <title>Bacterial genome adaptation to niches: divergence of the potential virulence genes in three Burkholderia species of different survival strategies.</title>
        <authorList>
            <person name="Kim H.S."/>
            <person name="Schell M.A."/>
            <person name="Yu Y."/>
            <person name="Ulrich R.L."/>
            <person name="Sarria S.H."/>
            <person name="Nierman W.C."/>
            <person name="DeShazer D."/>
        </authorList>
    </citation>
    <scope>NUCLEOTIDE SEQUENCE [LARGE SCALE GENOMIC DNA]</scope>
    <source>
        <strain>ATCC 700388 / DSM 13276 / CCUG 48851 / CIP 106301 / E264</strain>
    </source>
</reference>
<sequence length="265" mass="29365">MNHDDPNASGVPHDDANDAAPASASDAARATGHADDESSPLHLRRIRSFVTRAGRVSTGQRRAIDELGPRFVVPYDNAQPDWDTVFGRRAPRVLEIGFGMGASTAEIAAHRPGDDFIGVEVHEPGVGALLKLIGEQQLSNIRIIQHDAVEVLEHMIAPDSLDGAHIFFPDPWHKARHHKRRLIQPPFVAQLAARLKPGAYLHCATDWQNYAEQMLEVLGADPSLENTAQDYAPRPDYRPVTKFERRGLRLGHGVWDLVFRKKRAG</sequence>
<evidence type="ECO:0000250" key="1"/>
<evidence type="ECO:0000255" key="2">
    <source>
        <dbReference type="HAMAP-Rule" id="MF_01057"/>
    </source>
</evidence>
<evidence type="ECO:0000256" key="3">
    <source>
        <dbReference type="SAM" id="MobiDB-lite"/>
    </source>
</evidence>
<organism>
    <name type="scientific">Burkholderia thailandensis (strain ATCC 700388 / DSM 13276 / CCUG 48851 / CIP 106301 / E264)</name>
    <dbReference type="NCBI Taxonomy" id="271848"/>
    <lineage>
        <taxon>Bacteria</taxon>
        <taxon>Pseudomonadati</taxon>
        <taxon>Pseudomonadota</taxon>
        <taxon>Betaproteobacteria</taxon>
        <taxon>Burkholderiales</taxon>
        <taxon>Burkholderiaceae</taxon>
        <taxon>Burkholderia</taxon>
        <taxon>pseudomallei group</taxon>
    </lineage>
</organism>
<protein>
    <recommendedName>
        <fullName evidence="2">tRNA (guanine-N(7)-)-methyltransferase</fullName>
        <ecNumber evidence="2">2.1.1.33</ecNumber>
    </recommendedName>
    <alternativeName>
        <fullName evidence="2">tRNA (guanine(46)-N(7))-methyltransferase</fullName>
    </alternativeName>
    <alternativeName>
        <fullName evidence="2">tRNA(m7G46)-methyltransferase</fullName>
    </alternativeName>
</protein>
<dbReference type="EC" id="2.1.1.33" evidence="2"/>
<dbReference type="EMBL" id="CP000086">
    <property type="protein sequence ID" value="ABC36287.1"/>
    <property type="molecule type" value="Genomic_DNA"/>
</dbReference>
<dbReference type="RefSeq" id="WP_009889630.1">
    <property type="nucleotide sequence ID" value="NZ_CP008785.1"/>
</dbReference>
<dbReference type="SMR" id="Q2SYE0"/>
<dbReference type="GeneID" id="45121254"/>
<dbReference type="KEGG" id="bte:BTH_I1513"/>
<dbReference type="HOGENOM" id="CLU_050910_0_1_4"/>
<dbReference type="UniPathway" id="UPA00989"/>
<dbReference type="Proteomes" id="UP000001930">
    <property type="component" value="Chromosome I"/>
</dbReference>
<dbReference type="GO" id="GO:0043527">
    <property type="term" value="C:tRNA methyltransferase complex"/>
    <property type="evidence" value="ECO:0007669"/>
    <property type="project" value="TreeGrafter"/>
</dbReference>
<dbReference type="GO" id="GO:0008176">
    <property type="term" value="F:tRNA (guanine(46)-N7)-methyltransferase activity"/>
    <property type="evidence" value="ECO:0007669"/>
    <property type="project" value="UniProtKB-UniRule"/>
</dbReference>
<dbReference type="CDD" id="cd02440">
    <property type="entry name" value="AdoMet_MTases"/>
    <property type="match status" value="1"/>
</dbReference>
<dbReference type="FunFam" id="3.40.50.150:FF:000035">
    <property type="entry name" value="tRNA (guanine-N(7)-)-methyltransferase"/>
    <property type="match status" value="1"/>
</dbReference>
<dbReference type="Gene3D" id="3.40.50.150">
    <property type="entry name" value="Vaccinia Virus protein VP39"/>
    <property type="match status" value="1"/>
</dbReference>
<dbReference type="HAMAP" id="MF_01057">
    <property type="entry name" value="tRNA_methyltr_TrmB"/>
    <property type="match status" value="1"/>
</dbReference>
<dbReference type="InterPro" id="IPR029063">
    <property type="entry name" value="SAM-dependent_MTases_sf"/>
</dbReference>
<dbReference type="InterPro" id="IPR003358">
    <property type="entry name" value="tRNA_(Gua-N-7)_MeTrfase_Trmb"/>
</dbReference>
<dbReference type="InterPro" id="IPR055361">
    <property type="entry name" value="tRNA_methyltr_TrmB_bact"/>
</dbReference>
<dbReference type="NCBIfam" id="TIGR00091">
    <property type="entry name" value="tRNA (guanosine(46)-N7)-methyltransferase TrmB"/>
    <property type="match status" value="1"/>
</dbReference>
<dbReference type="PANTHER" id="PTHR23417">
    <property type="entry name" value="3-DEOXY-D-MANNO-OCTULOSONIC-ACID TRANSFERASE/TRNA GUANINE-N 7 - -METHYLTRANSFERASE"/>
    <property type="match status" value="1"/>
</dbReference>
<dbReference type="PANTHER" id="PTHR23417:SF14">
    <property type="entry name" value="PENTACOTRIPEPTIDE-REPEAT REGION OF PRORP DOMAIN-CONTAINING PROTEIN"/>
    <property type="match status" value="1"/>
</dbReference>
<dbReference type="Pfam" id="PF02390">
    <property type="entry name" value="Methyltransf_4"/>
    <property type="match status" value="1"/>
</dbReference>
<dbReference type="SUPFAM" id="SSF53335">
    <property type="entry name" value="S-adenosyl-L-methionine-dependent methyltransferases"/>
    <property type="match status" value="1"/>
</dbReference>
<dbReference type="PROSITE" id="PS51625">
    <property type="entry name" value="SAM_MT_TRMB"/>
    <property type="match status" value="1"/>
</dbReference>
<proteinExistence type="inferred from homology"/>
<keyword id="KW-0489">Methyltransferase</keyword>
<keyword id="KW-0949">S-adenosyl-L-methionine</keyword>
<keyword id="KW-0808">Transferase</keyword>
<keyword id="KW-0819">tRNA processing</keyword>